<comment type="function">
    <text>The epsilon chain is a beta-type chain of early mammalian embryonic hemoglobin.</text>
</comment>
<comment type="subunit">
    <text>Heterotetramer of two alpha chains and two epsilon chains in early embryonic hemoglobin Gower-2; two zeta chains and two epsilon chains in early embryonic hemoglobin Gower-1.</text>
</comment>
<comment type="tissue specificity">
    <text>Red blood cells.</text>
</comment>
<comment type="similarity">
    <text evidence="2">Belongs to the globin family.</text>
</comment>
<keyword id="KW-0349">Heme</keyword>
<keyword id="KW-0408">Iron</keyword>
<keyword id="KW-0479">Metal-binding</keyword>
<keyword id="KW-0561">Oxygen transport</keyword>
<keyword id="KW-0597">Phosphoprotein</keyword>
<keyword id="KW-0813">Transport</keyword>
<name>HBE_EULFU</name>
<sequence>MVHFTAEEKSTILSLWGKVNVEEAGGEALGRLLVVYPWTQRFFDNFGNLSSASAILGNPKVKAHGKKVLTSFGEAVKNMDNLKGAFAKLSELHCDKLHVDPENFKLLGNVMVIILATHFGKEFTPDVQAAWQKLVSGVATALAHKYH</sequence>
<feature type="chain" id="PRO_0000053209" description="Hemoglobin subunit epsilon">
    <location>
        <begin position="1"/>
        <end position="147"/>
    </location>
</feature>
<feature type="domain" description="Globin" evidence="2">
    <location>
        <begin position="3"/>
        <end position="147"/>
    </location>
</feature>
<feature type="binding site" description="distal binding residue" evidence="2">
    <location>
        <position position="64"/>
    </location>
    <ligand>
        <name>heme b</name>
        <dbReference type="ChEBI" id="CHEBI:60344"/>
    </ligand>
    <ligandPart>
        <name>Fe</name>
        <dbReference type="ChEBI" id="CHEBI:18248"/>
    </ligandPart>
</feature>
<feature type="binding site" description="proximal binding residue" evidence="2">
    <location>
        <position position="93"/>
    </location>
    <ligand>
        <name>heme b</name>
        <dbReference type="ChEBI" id="CHEBI:60344"/>
    </ligand>
    <ligandPart>
        <name>Fe</name>
        <dbReference type="ChEBI" id="CHEBI:18248"/>
    </ligandPart>
</feature>
<feature type="modified residue" description="Phosphoserine" evidence="1">
    <location>
        <position position="14"/>
    </location>
</feature>
<feature type="modified residue" description="Phosphoserine" evidence="1">
    <location>
        <position position="51"/>
    </location>
</feature>
<reference key="1">
    <citation type="journal article" date="1986" name="Mol. Biol. Evol.">
        <title>Nucleotide sequence analysis of the lemur beta-globin gene family: evidence for major rate fluctuations in globin polypeptide evolution.</title>
        <authorList>
            <person name="Harris S."/>
            <person name="Thackeray J.R."/>
            <person name="Jeffreys A.J."/>
            <person name="Weiss M.L."/>
        </authorList>
    </citation>
    <scope>NUCLEOTIDE SEQUENCE [GENOMIC DNA]</scope>
</reference>
<dbReference type="EMBL" id="M15735">
    <property type="protein sequence ID" value="AAA36823.1"/>
    <property type="molecule type" value="Genomic_DNA"/>
</dbReference>
<dbReference type="SMR" id="P08223"/>
<dbReference type="GO" id="GO:0072562">
    <property type="term" value="C:blood microparticle"/>
    <property type="evidence" value="ECO:0007669"/>
    <property type="project" value="TreeGrafter"/>
</dbReference>
<dbReference type="GO" id="GO:0031838">
    <property type="term" value="C:haptoglobin-hemoglobin complex"/>
    <property type="evidence" value="ECO:0007669"/>
    <property type="project" value="TreeGrafter"/>
</dbReference>
<dbReference type="GO" id="GO:0005833">
    <property type="term" value="C:hemoglobin complex"/>
    <property type="evidence" value="ECO:0007669"/>
    <property type="project" value="InterPro"/>
</dbReference>
<dbReference type="GO" id="GO:0031720">
    <property type="term" value="F:haptoglobin binding"/>
    <property type="evidence" value="ECO:0007669"/>
    <property type="project" value="TreeGrafter"/>
</dbReference>
<dbReference type="GO" id="GO:0020037">
    <property type="term" value="F:heme binding"/>
    <property type="evidence" value="ECO:0007669"/>
    <property type="project" value="InterPro"/>
</dbReference>
<dbReference type="GO" id="GO:0031721">
    <property type="term" value="F:hemoglobin alpha binding"/>
    <property type="evidence" value="ECO:0007669"/>
    <property type="project" value="TreeGrafter"/>
</dbReference>
<dbReference type="GO" id="GO:0046872">
    <property type="term" value="F:metal ion binding"/>
    <property type="evidence" value="ECO:0007669"/>
    <property type="project" value="UniProtKB-KW"/>
</dbReference>
<dbReference type="GO" id="GO:0043177">
    <property type="term" value="F:organic acid binding"/>
    <property type="evidence" value="ECO:0007669"/>
    <property type="project" value="TreeGrafter"/>
</dbReference>
<dbReference type="GO" id="GO:0019825">
    <property type="term" value="F:oxygen binding"/>
    <property type="evidence" value="ECO:0007669"/>
    <property type="project" value="InterPro"/>
</dbReference>
<dbReference type="GO" id="GO:0005344">
    <property type="term" value="F:oxygen carrier activity"/>
    <property type="evidence" value="ECO:0007669"/>
    <property type="project" value="UniProtKB-KW"/>
</dbReference>
<dbReference type="GO" id="GO:0004601">
    <property type="term" value="F:peroxidase activity"/>
    <property type="evidence" value="ECO:0007669"/>
    <property type="project" value="TreeGrafter"/>
</dbReference>
<dbReference type="GO" id="GO:0042744">
    <property type="term" value="P:hydrogen peroxide catabolic process"/>
    <property type="evidence" value="ECO:0007669"/>
    <property type="project" value="TreeGrafter"/>
</dbReference>
<dbReference type="CDD" id="cd08925">
    <property type="entry name" value="Hb-beta-like"/>
    <property type="match status" value="1"/>
</dbReference>
<dbReference type="FunFam" id="1.10.490.10:FF:000001">
    <property type="entry name" value="Hemoglobin subunit beta"/>
    <property type="match status" value="1"/>
</dbReference>
<dbReference type="Gene3D" id="1.10.490.10">
    <property type="entry name" value="Globins"/>
    <property type="match status" value="1"/>
</dbReference>
<dbReference type="InterPro" id="IPR000971">
    <property type="entry name" value="Globin"/>
</dbReference>
<dbReference type="InterPro" id="IPR009050">
    <property type="entry name" value="Globin-like_sf"/>
</dbReference>
<dbReference type="InterPro" id="IPR012292">
    <property type="entry name" value="Globin/Proto"/>
</dbReference>
<dbReference type="InterPro" id="IPR002337">
    <property type="entry name" value="Hemoglobin_b"/>
</dbReference>
<dbReference type="InterPro" id="IPR050056">
    <property type="entry name" value="Hemoglobin_oxygen_transport"/>
</dbReference>
<dbReference type="PANTHER" id="PTHR11442">
    <property type="entry name" value="HEMOGLOBIN FAMILY MEMBER"/>
    <property type="match status" value="1"/>
</dbReference>
<dbReference type="PANTHER" id="PTHR11442:SF7">
    <property type="entry name" value="HEMOGLOBIN SUBUNIT EPSILON"/>
    <property type="match status" value="1"/>
</dbReference>
<dbReference type="Pfam" id="PF00042">
    <property type="entry name" value="Globin"/>
    <property type="match status" value="1"/>
</dbReference>
<dbReference type="PRINTS" id="PR00814">
    <property type="entry name" value="BETAHAEM"/>
</dbReference>
<dbReference type="SUPFAM" id="SSF46458">
    <property type="entry name" value="Globin-like"/>
    <property type="match status" value="1"/>
</dbReference>
<dbReference type="PROSITE" id="PS01033">
    <property type="entry name" value="GLOBIN"/>
    <property type="match status" value="1"/>
</dbReference>
<evidence type="ECO:0000250" key="1">
    <source>
        <dbReference type="UniProtKB" id="P02100"/>
    </source>
</evidence>
<evidence type="ECO:0000255" key="2">
    <source>
        <dbReference type="PROSITE-ProRule" id="PRU00238"/>
    </source>
</evidence>
<organism>
    <name type="scientific">Eulemur fulvus fulvus</name>
    <name type="common">Brown lemur</name>
    <dbReference type="NCBI Taxonomy" id="40322"/>
    <lineage>
        <taxon>Eukaryota</taxon>
        <taxon>Metazoa</taxon>
        <taxon>Chordata</taxon>
        <taxon>Craniata</taxon>
        <taxon>Vertebrata</taxon>
        <taxon>Euteleostomi</taxon>
        <taxon>Mammalia</taxon>
        <taxon>Eutheria</taxon>
        <taxon>Euarchontoglires</taxon>
        <taxon>Primates</taxon>
        <taxon>Strepsirrhini</taxon>
        <taxon>Lemuriformes</taxon>
        <taxon>Lemuridae</taxon>
        <taxon>Eulemur</taxon>
    </lineage>
</organism>
<gene>
    <name type="primary">HBE1</name>
</gene>
<protein>
    <recommendedName>
        <fullName>Hemoglobin subunit epsilon</fullName>
    </recommendedName>
    <alternativeName>
        <fullName>Epsilon-globin</fullName>
    </alternativeName>
    <alternativeName>
        <fullName>Hemoglobin epsilon chain</fullName>
    </alternativeName>
</protein>
<proteinExistence type="evidence at transcript level"/>
<accession>P08223</accession>